<name>DCD_PARUW</name>
<feature type="chain" id="PRO_1000009778" description="dCTP deaminase">
    <location>
        <begin position="1"/>
        <end position="188"/>
    </location>
</feature>
<feature type="active site" description="Proton donor/acceptor" evidence="1">
    <location>
        <position position="137"/>
    </location>
</feature>
<feature type="binding site" evidence="1">
    <location>
        <begin position="111"/>
        <end position="116"/>
    </location>
    <ligand>
        <name>dCTP</name>
        <dbReference type="ChEBI" id="CHEBI:61481"/>
    </ligand>
</feature>
<feature type="binding site" evidence="1">
    <location>
        <begin position="135"/>
        <end position="137"/>
    </location>
    <ligand>
        <name>dCTP</name>
        <dbReference type="ChEBI" id="CHEBI:61481"/>
    </ligand>
</feature>
<feature type="binding site" evidence="1">
    <location>
        <position position="156"/>
    </location>
    <ligand>
        <name>dCTP</name>
        <dbReference type="ChEBI" id="CHEBI:61481"/>
    </ligand>
</feature>
<feature type="binding site" evidence="1">
    <location>
        <position position="170"/>
    </location>
    <ligand>
        <name>dCTP</name>
        <dbReference type="ChEBI" id="CHEBI:61481"/>
    </ligand>
</feature>
<feature type="binding site" evidence="1">
    <location>
        <position position="180"/>
    </location>
    <ligand>
        <name>dCTP</name>
        <dbReference type="ChEBI" id="CHEBI:61481"/>
    </ligand>
</feature>
<comment type="function">
    <text evidence="1">Catalyzes the deamination of dCTP to dUTP.</text>
</comment>
<comment type="catalytic activity">
    <reaction evidence="1">
        <text>dCTP + H2O + H(+) = dUTP + NH4(+)</text>
        <dbReference type="Rhea" id="RHEA:22680"/>
        <dbReference type="ChEBI" id="CHEBI:15377"/>
        <dbReference type="ChEBI" id="CHEBI:15378"/>
        <dbReference type="ChEBI" id="CHEBI:28938"/>
        <dbReference type="ChEBI" id="CHEBI:61481"/>
        <dbReference type="ChEBI" id="CHEBI:61555"/>
        <dbReference type="EC" id="3.5.4.13"/>
    </reaction>
</comment>
<comment type="pathway">
    <text evidence="1">Pyrimidine metabolism; dUMP biosynthesis; dUMP from dCTP (dUTP route): step 1/2.</text>
</comment>
<comment type="subunit">
    <text evidence="1">Homotrimer.</text>
</comment>
<comment type="similarity">
    <text evidence="1">Belongs to the dCTP deaminase family.</text>
</comment>
<gene>
    <name evidence="1" type="primary">dcd</name>
    <name type="ordered locus">pc0958</name>
</gene>
<organism>
    <name type="scientific">Protochlamydia amoebophila (strain UWE25)</name>
    <dbReference type="NCBI Taxonomy" id="264201"/>
    <lineage>
        <taxon>Bacteria</taxon>
        <taxon>Pseudomonadati</taxon>
        <taxon>Chlamydiota</taxon>
        <taxon>Chlamydiia</taxon>
        <taxon>Parachlamydiales</taxon>
        <taxon>Parachlamydiaceae</taxon>
        <taxon>Candidatus Protochlamydia</taxon>
    </lineage>
</organism>
<evidence type="ECO:0000255" key="1">
    <source>
        <dbReference type="HAMAP-Rule" id="MF_00146"/>
    </source>
</evidence>
<protein>
    <recommendedName>
        <fullName evidence="1">dCTP deaminase</fullName>
        <ecNumber evidence="1">3.5.4.13</ecNumber>
    </recommendedName>
    <alternativeName>
        <fullName evidence="1">Deoxycytidine triphosphate deaminase</fullName>
    </alternativeName>
</protein>
<dbReference type="EC" id="3.5.4.13" evidence="1"/>
<dbReference type="EMBL" id="BX908798">
    <property type="protein sequence ID" value="CAF23682.1"/>
    <property type="molecule type" value="Genomic_DNA"/>
</dbReference>
<dbReference type="RefSeq" id="WP_011175508.1">
    <property type="nucleotide sequence ID" value="NC_005861.2"/>
</dbReference>
<dbReference type="SMR" id="Q6MCL7"/>
<dbReference type="STRING" id="264201.pc0958"/>
<dbReference type="KEGG" id="pcu:PC_RS04620"/>
<dbReference type="eggNOG" id="COG0717">
    <property type="taxonomic scope" value="Bacteria"/>
</dbReference>
<dbReference type="HOGENOM" id="CLU_087476_4_0_0"/>
<dbReference type="OrthoDB" id="9780202at2"/>
<dbReference type="UniPathway" id="UPA00610">
    <property type="reaction ID" value="UER00665"/>
</dbReference>
<dbReference type="Proteomes" id="UP000000529">
    <property type="component" value="Chromosome"/>
</dbReference>
<dbReference type="GO" id="GO:0008829">
    <property type="term" value="F:dCTP deaminase activity"/>
    <property type="evidence" value="ECO:0007669"/>
    <property type="project" value="UniProtKB-UniRule"/>
</dbReference>
<dbReference type="GO" id="GO:0000166">
    <property type="term" value="F:nucleotide binding"/>
    <property type="evidence" value="ECO:0007669"/>
    <property type="project" value="UniProtKB-KW"/>
</dbReference>
<dbReference type="GO" id="GO:0006226">
    <property type="term" value="P:dUMP biosynthetic process"/>
    <property type="evidence" value="ECO:0007669"/>
    <property type="project" value="UniProtKB-UniPathway"/>
</dbReference>
<dbReference type="GO" id="GO:0006229">
    <property type="term" value="P:dUTP biosynthetic process"/>
    <property type="evidence" value="ECO:0007669"/>
    <property type="project" value="UniProtKB-UniRule"/>
</dbReference>
<dbReference type="GO" id="GO:0015949">
    <property type="term" value="P:nucleobase-containing small molecule interconversion"/>
    <property type="evidence" value="ECO:0007669"/>
    <property type="project" value="TreeGrafter"/>
</dbReference>
<dbReference type="CDD" id="cd07557">
    <property type="entry name" value="trimeric_dUTPase"/>
    <property type="match status" value="1"/>
</dbReference>
<dbReference type="FunFam" id="2.70.40.10:FF:000001">
    <property type="entry name" value="dCTP deaminase"/>
    <property type="match status" value="1"/>
</dbReference>
<dbReference type="Gene3D" id="2.70.40.10">
    <property type="match status" value="1"/>
</dbReference>
<dbReference type="HAMAP" id="MF_00146">
    <property type="entry name" value="dCTP_deaminase"/>
    <property type="match status" value="1"/>
</dbReference>
<dbReference type="InterPro" id="IPR011962">
    <property type="entry name" value="dCTP_deaminase"/>
</dbReference>
<dbReference type="InterPro" id="IPR036157">
    <property type="entry name" value="dUTPase-like_sf"/>
</dbReference>
<dbReference type="InterPro" id="IPR033704">
    <property type="entry name" value="dUTPase_trimeric"/>
</dbReference>
<dbReference type="NCBIfam" id="TIGR02274">
    <property type="entry name" value="dCTP_deam"/>
    <property type="match status" value="1"/>
</dbReference>
<dbReference type="PANTHER" id="PTHR42680">
    <property type="entry name" value="DCTP DEAMINASE"/>
    <property type="match status" value="1"/>
</dbReference>
<dbReference type="PANTHER" id="PTHR42680:SF3">
    <property type="entry name" value="DCTP DEAMINASE"/>
    <property type="match status" value="1"/>
</dbReference>
<dbReference type="Pfam" id="PF22769">
    <property type="entry name" value="DCD"/>
    <property type="match status" value="1"/>
</dbReference>
<dbReference type="SUPFAM" id="SSF51283">
    <property type="entry name" value="dUTPase-like"/>
    <property type="match status" value="1"/>
</dbReference>
<keyword id="KW-0378">Hydrolase</keyword>
<keyword id="KW-0546">Nucleotide metabolism</keyword>
<keyword id="KW-0547">Nucleotide-binding</keyword>
<keyword id="KW-1185">Reference proteome</keyword>
<proteinExistence type="inferred from homology"/>
<accession>Q6MCL7</accession>
<reference key="1">
    <citation type="journal article" date="2004" name="Science">
        <title>Illuminating the evolutionary history of chlamydiae.</title>
        <authorList>
            <person name="Horn M."/>
            <person name="Collingro A."/>
            <person name="Schmitz-Esser S."/>
            <person name="Beier C.L."/>
            <person name="Purkhold U."/>
            <person name="Fartmann B."/>
            <person name="Brandt P."/>
            <person name="Nyakatura G.J."/>
            <person name="Droege M."/>
            <person name="Frishman D."/>
            <person name="Rattei T."/>
            <person name="Mewes H.-W."/>
            <person name="Wagner M."/>
        </authorList>
    </citation>
    <scope>NUCLEOTIDE SEQUENCE [LARGE SCALE GENOMIC DNA]</scope>
    <source>
        <strain>UWE25</strain>
    </source>
</reference>
<sequence>MSICSDNWIIEKCLKEKMIEPFVDKQVRFENGEKIISYGVSSYGYDIRVSNQFQIFTNVYGSIVDPKQFDTKSLVKIEDDVCVIPPNSFALAITLEYFRIPENVLTICVGKSTYARCGIIVNVTPFEPGWEGYAVLEISNTTPLPAKIYAGEGIAQVLFFEGKEKCLYTYAARNGKYHRQMTLTLPLL</sequence>